<comment type="function">
    <text evidence="3 6 7">Required for the maintenance of the bipolar budding pattern (PubMed:11110666). Involved in selecting bud sites at both the distal and proximal poles of daughter cells as well as near previously used division sites on mother cells (PubMed:11110666). The RAX1-RAX2 complex performs the asymmetric localization of the two cortical landmarks, BUD8 and BUD9, at the distal and proximal poles, respectively (PubMed:20678480, PubMed:32152126).</text>
</comment>
<comment type="subunit">
    <text evidence="5 6">Forms an heterodimeric complex with RAX1 (PubMed:15356260). Interacts with BUD8 at the proximal or distal pole in unbudded cells (PubMed:20678480). Interacts with BUD9 at the birth scar in budded mother cells (PubMed:20678480).</text>
</comment>
<comment type="subcellular location">
    <subcellularLocation>
        <location evidence="3">Cell membrane</location>
        <topology evidence="1">Single-pass type I membrane protein</topology>
    </subcellularLocation>
    <subcellularLocation>
        <location evidence="3">Bud neck</location>
    </subcellularLocation>
    <subcellularLocation>
        <location evidence="3 8">Bud tip</location>
    </subcellularLocation>
    <text evidence="3 6">Before cytokinesis, RAX2 concentrates as a ring at the mother-bud neck and to the tip of the bud. The RAX2 ring splits at cytokinesis, endowing each progeny cell with a RAX2 ring and additional RAX2 localization at the distal bud pole of the newborn daughter cell. The rings persist at the cell cortex for several generations, giving rise to cells decorated by multiple rings.</text>
</comment>
<comment type="PTM">
    <text evidence="5">Glycosylated.</text>
</comment>
<comment type="miscellaneous">
    <text evidence="4">Present with 3670 molecules/cell in log phase SD medium.</text>
</comment>
<comment type="similarity">
    <text evidence="9">Belongs to the RAX2 family.</text>
</comment>
<name>RAX2_YEAST</name>
<sequence>MFVHRLWTLAFPFLVEISKASQLENIKSLLDIEDNVLPNLNISQNNSNAVQILGGVDALSFYEYTGQQNFTKEIGPETSSHGLVYYSNNTYIQLEDASDDTRIDKITPFGVDSFILSGSGTINNISVGNQILYNLSTLSMTPIFNQSLGAVQAVLADNSSIYFGGNFSYNNGSMTGYSALIWDSISNTTQLLPFGGFGENSSVNSIVKLNNDNILFAGQFYTLDDPSALISSSNNGTNSTSSLNATTLELGQRIPLRYASWDSQGSTTFASDSLVCPNTNEDAWLYPDTSGSLVCNLPYEVSPTKIRLYNSQRSDSEISVFQILTDPSSSIMNLTYLDPLSGELKNCGEFCPLYSRATLLSASQNVSSSMDMITFIDNNKTDVKWTSDFQDFAFVNELPVSSLKFVALNSYGGSVGLSGLELYQDTFSTYANDSLNEYGCSALTNDSSSSTLSSNDWYNGLTGESYIAAKYVPDQNEPIPRVKFYPNIIHPGHYTINMYTPGCLQDNTCSARGIVNVTMWNQQNNTIMKTYLIYQNNDNLKYDQIYSGYLDFSPEIVLEYVSGIYTTNTATVVVADQVNVITVSLDAFNTLSDSSNAKKETLLNGILQYQKSNFTSTRLNETKVGNTTLNLFPVKNYPKNSSLYADIYDNKLVIGGVSNRISIVDLNDDFEVTSSKNQTIQGDVHGITKTNQGLLIFGDILSSNNQSAVFLFNGSFENVFNQSRTVNSALNISLANNDFIVLDNDYVVNASSNALIRNSSSFSLSLWAAGNNGDGDVLFSGAVSHMQYGNLNGSVRFLNENEIEPLNLEGGIVPYLGAYLNESATAYAYEVDSLNKIYFSNEVYPSWNWSSGITQMLYADNQTLLAVSAGSSTTAELSIFDLRNLTMIANETLGSNARINALVNFEKNCSMLVGGDFQMTEPNCTGLCLYNYESKTWSTFLNNTIFGEITQLSFTNSSELIISGLFETKEYQSIRLGSFNLTNSTMIPLLSGSEGKLNSFTVTEDSIVAWNDTSLFIYRNQEWNITSLPGNASSISSVSAIYTDIESNTLNKRGINNVNNGSILLLNGNFNISQYGYLQSLLFDFQKWTPYFISETTNTSNYNPIIFINRDVSTEFNSQSPLANVNITVTSPQSTSSQPPSSSASSESKSKSKKKKIGRGFVVLIGLALALGTVSVLGIAGVILAYVFKDPEGDYKPIKPRIDENEMLDTVPPEKLMKFV</sequence>
<evidence type="ECO:0000255" key="1"/>
<evidence type="ECO:0000256" key="2">
    <source>
        <dbReference type="SAM" id="MobiDB-lite"/>
    </source>
</evidence>
<evidence type="ECO:0000269" key="3">
    <source>
    </source>
</evidence>
<evidence type="ECO:0000269" key="4">
    <source>
    </source>
</evidence>
<evidence type="ECO:0000269" key="5">
    <source>
    </source>
</evidence>
<evidence type="ECO:0000269" key="6">
    <source>
    </source>
</evidence>
<evidence type="ECO:0000269" key="7">
    <source>
    </source>
</evidence>
<evidence type="ECO:0000303" key="8">
    <source>
    </source>
</evidence>
<evidence type="ECO:0000305" key="9"/>
<keyword id="KW-0131">Cell cycle</keyword>
<keyword id="KW-0132">Cell division</keyword>
<keyword id="KW-1003">Cell membrane</keyword>
<keyword id="KW-0325">Glycoprotein</keyword>
<keyword id="KW-0472">Membrane</keyword>
<keyword id="KW-1185">Reference proteome</keyword>
<keyword id="KW-0732">Signal</keyword>
<keyword id="KW-0812">Transmembrane</keyword>
<keyword id="KW-1133">Transmembrane helix</keyword>
<proteinExistence type="evidence at protein level"/>
<organism>
    <name type="scientific">Saccharomyces cerevisiae (strain ATCC 204508 / S288c)</name>
    <name type="common">Baker's yeast</name>
    <dbReference type="NCBI Taxonomy" id="559292"/>
    <lineage>
        <taxon>Eukaryota</taxon>
        <taxon>Fungi</taxon>
        <taxon>Dikarya</taxon>
        <taxon>Ascomycota</taxon>
        <taxon>Saccharomycotina</taxon>
        <taxon>Saccharomycetes</taxon>
        <taxon>Saccharomycetales</taxon>
        <taxon>Saccharomycetaceae</taxon>
        <taxon>Saccharomyces</taxon>
    </lineage>
</organism>
<feature type="signal peptide" evidence="1">
    <location>
        <begin position="1"/>
        <end position="20"/>
    </location>
</feature>
<feature type="chain" id="PRO_0000262737" description="Bud site selection protein RAX2">
    <location>
        <begin position="21"/>
        <end position="1220"/>
    </location>
</feature>
<feature type="topological domain" description="Extracellular" evidence="1">
    <location>
        <begin position="21"/>
        <end position="1162"/>
    </location>
</feature>
<feature type="transmembrane region" description="Helical" evidence="1">
    <location>
        <begin position="1163"/>
        <end position="1183"/>
    </location>
</feature>
<feature type="topological domain" description="Cytoplasmic" evidence="1">
    <location>
        <begin position="1184"/>
        <end position="1220"/>
    </location>
</feature>
<feature type="region of interest" description="Disordered" evidence="2">
    <location>
        <begin position="1129"/>
        <end position="1151"/>
    </location>
</feature>
<feature type="compositionally biased region" description="Low complexity" evidence="2">
    <location>
        <begin position="1131"/>
        <end position="1147"/>
    </location>
</feature>
<feature type="glycosylation site" description="N-linked (GlcNAc...) asparagine" evidence="1">
    <location>
        <position position="41"/>
    </location>
</feature>
<feature type="glycosylation site" description="N-linked (GlcNAc...) asparagine" evidence="1">
    <location>
        <position position="45"/>
    </location>
</feature>
<feature type="glycosylation site" description="N-linked (GlcNAc...) asparagine" evidence="1">
    <location>
        <position position="69"/>
    </location>
</feature>
<feature type="glycosylation site" description="N-linked (GlcNAc...) asparagine" evidence="1">
    <location>
        <position position="88"/>
    </location>
</feature>
<feature type="glycosylation site" description="N-linked (GlcNAc...) asparagine" evidence="1">
    <location>
        <position position="124"/>
    </location>
</feature>
<feature type="glycosylation site" description="N-linked (GlcNAc...) asparagine" evidence="1">
    <location>
        <position position="134"/>
    </location>
</feature>
<feature type="glycosylation site" description="N-linked (GlcNAc...) asparagine" evidence="1">
    <location>
        <position position="145"/>
    </location>
</feature>
<feature type="glycosylation site" description="N-linked (GlcNAc...) asparagine" evidence="1">
    <location>
        <position position="158"/>
    </location>
</feature>
<feature type="glycosylation site" description="N-linked (GlcNAc...) asparagine" evidence="1">
    <location>
        <position position="166"/>
    </location>
</feature>
<feature type="glycosylation site" description="N-linked (GlcNAc...) asparagine" evidence="1">
    <location>
        <position position="171"/>
    </location>
</feature>
<feature type="glycosylation site" description="N-linked (GlcNAc...) asparagine" evidence="1">
    <location>
        <position position="187"/>
    </location>
</feature>
<feature type="glycosylation site" description="N-linked (GlcNAc...) asparagine" evidence="1">
    <location>
        <position position="200"/>
    </location>
</feature>
<feature type="glycosylation site" description="N-linked (GlcNAc...) asparagine" evidence="1">
    <location>
        <position position="235"/>
    </location>
</feature>
<feature type="glycosylation site" description="N-linked (GlcNAc...) asparagine" evidence="1">
    <location>
        <position position="238"/>
    </location>
</feature>
<feature type="glycosylation site" description="N-linked (GlcNAc...) asparagine" evidence="1">
    <location>
        <position position="244"/>
    </location>
</feature>
<feature type="glycosylation site" description="N-linked (GlcNAc...) asparagine" evidence="1">
    <location>
        <position position="333"/>
    </location>
</feature>
<feature type="glycosylation site" description="N-linked (GlcNAc...) asparagine" evidence="1">
    <location>
        <position position="365"/>
    </location>
</feature>
<feature type="glycosylation site" description="N-linked (GlcNAc...) asparagine" evidence="1">
    <location>
        <position position="379"/>
    </location>
</feature>
<feature type="glycosylation site" description="N-linked (GlcNAc...) asparagine" evidence="1">
    <location>
        <position position="432"/>
    </location>
</feature>
<feature type="glycosylation site" description="N-linked (GlcNAc...) asparagine" evidence="1">
    <location>
        <position position="445"/>
    </location>
</feature>
<feature type="glycosylation site" description="N-linked (GlcNAc...) asparagine" evidence="1">
    <location>
        <position position="516"/>
    </location>
</feature>
<feature type="glycosylation site" description="N-linked (GlcNAc...) asparagine" evidence="1">
    <location>
        <position position="524"/>
    </location>
</feature>
<feature type="glycosylation site" description="N-linked (GlcNAc...) asparagine" evidence="1">
    <location>
        <position position="613"/>
    </location>
</feature>
<feature type="glycosylation site" description="N-linked (GlcNAc...) asparagine" evidence="1">
    <location>
        <position position="620"/>
    </location>
</feature>
<feature type="glycosylation site" description="N-linked (GlcNAc...) asparagine" evidence="1">
    <location>
        <position position="626"/>
    </location>
</feature>
<feature type="glycosylation site" description="N-linked (GlcNAc...) asparagine" evidence="1">
    <location>
        <position position="640"/>
    </location>
</feature>
<feature type="glycosylation site" description="N-linked (GlcNAc...) asparagine" evidence="1">
    <location>
        <position position="677"/>
    </location>
</feature>
<feature type="glycosylation site" description="N-linked (GlcNAc...) asparagine" evidence="1">
    <location>
        <position position="705"/>
    </location>
</feature>
<feature type="glycosylation site" description="N-linked (GlcNAc...) asparagine" evidence="1">
    <location>
        <position position="713"/>
    </location>
</feature>
<feature type="glycosylation site" description="N-linked (GlcNAc...) asparagine" evidence="1">
    <location>
        <position position="721"/>
    </location>
</feature>
<feature type="glycosylation site" description="N-linked (GlcNAc...) asparagine" evidence="1">
    <location>
        <position position="731"/>
    </location>
</feature>
<feature type="glycosylation site" description="N-linked (GlcNAc...) asparagine" evidence="1">
    <location>
        <position position="749"/>
    </location>
</feature>
<feature type="glycosylation site" description="N-linked (GlcNAc...) asparagine" evidence="1">
    <location>
        <position position="758"/>
    </location>
</feature>
<feature type="glycosylation site" description="N-linked (GlcNAc...) asparagine" evidence="1">
    <location>
        <position position="792"/>
    </location>
</feature>
<feature type="glycosylation site" description="N-linked (GlcNAc...) asparagine" evidence="1">
    <location>
        <position position="821"/>
    </location>
</feature>
<feature type="glycosylation site" description="N-linked (GlcNAc...) asparagine" evidence="1">
    <location>
        <position position="848"/>
    </location>
</feature>
<feature type="glycosylation site" description="N-linked (GlcNAc...) asparagine" evidence="1">
    <location>
        <position position="861"/>
    </location>
</feature>
<feature type="glycosylation site" description="N-linked (GlcNAc...) asparagine" evidence="1">
    <location>
        <position position="884"/>
    </location>
</feature>
<feature type="glycosylation site" description="N-linked (GlcNAc...) asparagine" evidence="1">
    <location>
        <position position="890"/>
    </location>
</feature>
<feature type="glycosylation site" description="N-linked (GlcNAc...) asparagine" evidence="1">
    <location>
        <position position="908"/>
    </location>
</feature>
<feature type="glycosylation site" description="N-linked (GlcNAc...) asparagine" evidence="1">
    <location>
        <position position="923"/>
    </location>
</feature>
<feature type="glycosylation site" description="N-linked (GlcNAc...) asparagine" evidence="1">
    <location>
        <position position="942"/>
    </location>
</feature>
<feature type="glycosylation site" description="N-linked (GlcNAc...) asparagine" evidence="1">
    <location>
        <position position="956"/>
    </location>
</feature>
<feature type="glycosylation site" description="N-linked (GlcNAc...) asparagine" evidence="1">
    <location>
        <position position="980"/>
    </location>
</feature>
<feature type="glycosylation site" description="N-linked (GlcNAc...) asparagine" evidence="1">
    <location>
        <position position="983"/>
    </location>
</feature>
<feature type="glycosylation site" description="N-linked (GlcNAc...) asparagine" evidence="1">
    <location>
        <position position="1011"/>
    </location>
</feature>
<feature type="glycosylation site" description="N-linked (GlcNAc...) asparagine" evidence="1">
    <location>
        <position position="1024"/>
    </location>
</feature>
<feature type="glycosylation site" description="N-linked (GlcNAc...) asparagine" evidence="1">
    <location>
        <position position="1031"/>
    </location>
</feature>
<feature type="glycosylation site" description="N-linked (GlcNAc...) asparagine" evidence="1">
    <location>
        <position position="1060"/>
    </location>
</feature>
<feature type="glycosylation site" description="N-linked (GlcNAc...) asparagine" evidence="1">
    <location>
        <position position="1071"/>
    </location>
</feature>
<feature type="glycosylation site" description="N-linked (GlcNAc...) asparagine" evidence="1">
    <location>
        <position position="1098"/>
    </location>
</feature>
<feature type="glycosylation site" description="N-linked (GlcNAc...) asparagine" evidence="1">
    <location>
        <position position="1126"/>
    </location>
</feature>
<accession>Q12465</accession>
<accession>D6VY84</accession>
<gene>
    <name type="primary">RAX2</name>
    <name type="ordered locus">YLR084C</name>
    <name type="ORF">L2389</name>
    <name type="ORF">L9449.12</name>
</gene>
<reference key="1">
    <citation type="journal article" date="1997" name="Nature">
        <title>The nucleotide sequence of Saccharomyces cerevisiae chromosome XII.</title>
        <authorList>
            <person name="Johnston M."/>
            <person name="Hillier L.W."/>
            <person name="Riles L."/>
            <person name="Albermann K."/>
            <person name="Andre B."/>
            <person name="Ansorge W."/>
            <person name="Benes V."/>
            <person name="Brueckner M."/>
            <person name="Delius H."/>
            <person name="Dubois E."/>
            <person name="Duesterhoeft A."/>
            <person name="Entian K.-D."/>
            <person name="Floeth M."/>
            <person name="Goffeau A."/>
            <person name="Hebling U."/>
            <person name="Heumann K."/>
            <person name="Heuss-Neitzel D."/>
            <person name="Hilbert H."/>
            <person name="Hilger F."/>
            <person name="Kleine K."/>
            <person name="Koetter P."/>
            <person name="Louis E.J."/>
            <person name="Messenguy F."/>
            <person name="Mewes H.-W."/>
            <person name="Miosga T."/>
            <person name="Moestl D."/>
            <person name="Mueller-Auer S."/>
            <person name="Nentwich U."/>
            <person name="Obermaier B."/>
            <person name="Piravandi E."/>
            <person name="Pohl T.M."/>
            <person name="Portetelle D."/>
            <person name="Purnelle B."/>
            <person name="Rechmann S."/>
            <person name="Rieger M."/>
            <person name="Rinke M."/>
            <person name="Rose M."/>
            <person name="Scharfe M."/>
            <person name="Scherens B."/>
            <person name="Scholler P."/>
            <person name="Schwager C."/>
            <person name="Schwarz S."/>
            <person name="Underwood A.P."/>
            <person name="Urrestarazu L.A."/>
            <person name="Vandenbol M."/>
            <person name="Verhasselt P."/>
            <person name="Vierendeels F."/>
            <person name="Voet M."/>
            <person name="Volckaert G."/>
            <person name="Voss H."/>
            <person name="Wambutt R."/>
            <person name="Wedler E."/>
            <person name="Wedler H."/>
            <person name="Zimmermann F.K."/>
            <person name="Zollner A."/>
            <person name="Hani J."/>
            <person name="Hoheisel J.D."/>
        </authorList>
    </citation>
    <scope>NUCLEOTIDE SEQUENCE [LARGE SCALE GENOMIC DNA]</scope>
    <source>
        <strain>ATCC 204508 / S288c</strain>
    </source>
</reference>
<reference key="2">
    <citation type="journal article" date="2014" name="G3 (Bethesda)">
        <title>The reference genome sequence of Saccharomyces cerevisiae: Then and now.</title>
        <authorList>
            <person name="Engel S.R."/>
            <person name="Dietrich F.S."/>
            <person name="Fisk D.G."/>
            <person name="Binkley G."/>
            <person name="Balakrishnan R."/>
            <person name="Costanzo M.C."/>
            <person name="Dwight S.S."/>
            <person name="Hitz B.C."/>
            <person name="Karra K."/>
            <person name="Nash R.S."/>
            <person name="Weng S."/>
            <person name="Wong E.D."/>
            <person name="Lloyd P."/>
            <person name="Skrzypek M.S."/>
            <person name="Miyasato S.R."/>
            <person name="Simison M."/>
            <person name="Cherry J.M."/>
        </authorList>
    </citation>
    <scope>GENOME REANNOTATION</scope>
    <source>
        <strain>ATCC 204508 / S288c</strain>
    </source>
</reference>
<reference key="3">
    <citation type="journal article" date="2000" name="Science">
        <title>Multigenerational cortical inheritance of the Rax2 protein in orienting polarity and division in yeast.</title>
        <authorList>
            <person name="Chen T."/>
            <person name="Hiroko T."/>
            <person name="Chaudhuri A."/>
            <person name="Inose F."/>
            <person name="Lord M."/>
            <person name="Tanaka S."/>
            <person name="Chant J."/>
            <person name="Fujita A."/>
        </authorList>
    </citation>
    <scope>FUNCTION</scope>
    <scope>SUBCELLULAR LOCATION</scope>
</reference>
<reference key="4">
    <citation type="journal article" date="2003" name="Nature">
        <title>Global analysis of protein localization in budding yeast.</title>
        <authorList>
            <person name="Huh W.-K."/>
            <person name="Falvo J.V."/>
            <person name="Gerke L.C."/>
            <person name="Carroll A.S."/>
            <person name="Howson R.W."/>
            <person name="Weissman J.S."/>
            <person name="O'Shea E.K."/>
        </authorList>
    </citation>
    <scope>SUBCELLULAR LOCATION [LARGE SCALE ANALYSIS]</scope>
</reference>
<reference key="5">
    <citation type="journal article" date="2003" name="Nature">
        <title>Global analysis of protein expression in yeast.</title>
        <authorList>
            <person name="Ghaemmaghami S."/>
            <person name="Huh W.-K."/>
            <person name="Bower K."/>
            <person name="Howson R.W."/>
            <person name="Belle A."/>
            <person name="Dephoure N."/>
            <person name="O'Shea E.K."/>
            <person name="Weissman J.S."/>
        </authorList>
    </citation>
    <scope>LEVEL OF PROTEIN EXPRESSION [LARGE SCALE ANALYSIS]</scope>
</reference>
<reference key="6">
    <citation type="journal article" date="2004" name="Mol. Biol. Cell">
        <title>Interactions among Rax1p, Rax2p, Bud8p, and Bud9p in marking cortical sites for bipolar bud-site selection in yeast.</title>
        <authorList>
            <person name="Kang P.J."/>
            <person name="Angerman E."/>
            <person name="Nakashima K."/>
            <person name="Pringle J.R."/>
            <person name="Park H.-O."/>
        </authorList>
    </citation>
    <scope>INTERACTION WITH RAX1</scope>
    <scope>SUBCELLULAR LOCATION</scope>
    <scope>GLYCOSYLATION</scope>
</reference>
<reference key="7">
    <citation type="journal article" date="2010" name="Biochem. Biophys. Res. Commun.">
        <title>Subcellular localization of the interaction of bipolar landmarks Bud8p and Bud9p with Rax2p in Saccharomyces cerevisiae diploid cells.</title>
        <authorList>
            <person name="Kato Y."/>
            <person name="Kawasaki H."/>
            <person name="Arakawa N."/>
            <person name="Hirano H."/>
        </authorList>
    </citation>
    <scope>FUNCTION</scope>
    <scope>INTERACTION WITH BUD8 AND BUD9</scope>
    <scope>SUBCELLULAR LOCATION</scope>
</reference>
<reference key="8">
    <citation type="journal article" date="2011" name="Genetics">
        <title>Cell polarity in Saccharomyces cerevisiae depends on proper localization of the Bud9 landmark protein by the EKC/KEOPS complex.</title>
        <authorList>
            <person name="Kato Y."/>
            <person name="Kawasaki H."/>
            <person name="Ohyama Y."/>
            <person name="Morishita T."/>
            <person name="Iwasaki H."/>
            <person name="Kokubo T."/>
            <person name="Hirano H."/>
        </authorList>
    </citation>
    <scope>FUNCTION</scope>
</reference>
<reference key="9">
    <citation type="journal article" date="2020" name="Proc. Natl. Acad. Sci. U.S.A.">
        <title>Mitotic and pheromone-specific intrinsic polarization cues interfere with gradient sensing in Saccharomyces cerevisiae.</title>
        <authorList>
            <person name="Vasen G."/>
            <person name="Dunayevich P."/>
            <person name="Colman-Lerner A."/>
        </authorList>
    </citation>
    <scope>FUNCTION</scope>
</reference>
<dbReference type="EMBL" id="U53880">
    <property type="protein sequence ID" value="AAB67588.1"/>
    <property type="molecule type" value="Genomic_DNA"/>
</dbReference>
<dbReference type="EMBL" id="Z73256">
    <property type="protein sequence ID" value="CAA97644.1"/>
    <property type="molecule type" value="Genomic_DNA"/>
</dbReference>
<dbReference type="EMBL" id="BK006945">
    <property type="protein sequence ID" value="DAA09400.1"/>
    <property type="molecule type" value="Genomic_DNA"/>
</dbReference>
<dbReference type="PIR" id="S64916">
    <property type="entry name" value="S64916"/>
</dbReference>
<dbReference type="RefSeq" id="NP_013185.1">
    <property type="nucleotide sequence ID" value="NM_001181971.1"/>
</dbReference>
<dbReference type="SMR" id="Q12465"/>
<dbReference type="BioGRID" id="31357">
    <property type="interactions" value="89"/>
</dbReference>
<dbReference type="FunCoup" id="Q12465">
    <property type="interactions" value="109"/>
</dbReference>
<dbReference type="IntAct" id="Q12465">
    <property type="interactions" value="5"/>
</dbReference>
<dbReference type="MINT" id="Q12465"/>
<dbReference type="STRING" id="4932.YLR084C"/>
<dbReference type="GlyCosmos" id="Q12465">
    <property type="glycosylation" value="52 sites, No reported glycans"/>
</dbReference>
<dbReference type="GlyGen" id="Q12465">
    <property type="glycosylation" value="52 sites"/>
</dbReference>
<dbReference type="iPTMnet" id="Q12465"/>
<dbReference type="PaxDb" id="4932-YLR084C"/>
<dbReference type="PeptideAtlas" id="Q12465"/>
<dbReference type="EnsemblFungi" id="YLR084C_mRNA">
    <property type="protein sequence ID" value="YLR084C"/>
    <property type="gene ID" value="YLR084C"/>
</dbReference>
<dbReference type="GeneID" id="850773"/>
<dbReference type="KEGG" id="sce:YLR084C"/>
<dbReference type="AGR" id="SGD:S000004074"/>
<dbReference type="SGD" id="S000004074">
    <property type="gene designation" value="RAX2"/>
</dbReference>
<dbReference type="VEuPathDB" id="FungiDB:YLR084C"/>
<dbReference type="eggNOG" id="ENOG502QQZD">
    <property type="taxonomic scope" value="Eukaryota"/>
</dbReference>
<dbReference type="HOGENOM" id="CLU_005863_0_0_1"/>
<dbReference type="InParanoid" id="Q12465"/>
<dbReference type="OMA" id="NMYTPGC"/>
<dbReference type="OrthoDB" id="2503993at2759"/>
<dbReference type="BioCyc" id="YEAST:G3O-32235-MONOMER"/>
<dbReference type="BioGRID-ORCS" id="850773">
    <property type="hits" value="1 hit in 10 CRISPR screens"/>
</dbReference>
<dbReference type="PRO" id="PR:Q12465"/>
<dbReference type="Proteomes" id="UP000002311">
    <property type="component" value="Chromosome XII"/>
</dbReference>
<dbReference type="RNAct" id="Q12465">
    <property type="molecule type" value="protein"/>
</dbReference>
<dbReference type="GO" id="GO:0005935">
    <property type="term" value="C:cellular bud neck"/>
    <property type="evidence" value="ECO:0000314"/>
    <property type="project" value="SGD"/>
</dbReference>
<dbReference type="GO" id="GO:0005621">
    <property type="term" value="C:cellular bud scar"/>
    <property type="evidence" value="ECO:0000314"/>
    <property type="project" value="SGD"/>
</dbReference>
<dbReference type="GO" id="GO:0005934">
    <property type="term" value="C:cellular bud tip"/>
    <property type="evidence" value="ECO:0007669"/>
    <property type="project" value="UniProtKB-SubCell"/>
</dbReference>
<dbReference type="GO" id="GO:0005783">
    <property type="term" value="C:endoplasmic reticulum"/>
    <property type="evidence" value="ECO:0007005"/>
    <property type="project" value="SGD"/>
</dbReference>
<dbReference type="GO" id="GO:0005739">
    <property type="term" value="C:mitochondrion"/>
    <property type="evidence" value="ECO:0007005"/>
    <property type="project" value="SGD"/>
</dbReference>
<dbReference type="GO" id="GO:1902929">
    <property type="term" value="C:plasma membrane of growing cell tip"/>
    <property type="evidence" value="ECO:0000318"/>
    <property type="project" value="GO_Central"/>
</dbReference>
<dbReference type="GO" id="GO:0007120">
    <property type="term" value="P:axial cellular bud site selection"/>
    <property type="evidence" value="ECO:0000315"/>
    <property type="project" value="SGD"/>
</dbReference>
<dbReference type="GO" id="GO:0007121">
    <property type="term" value="P:bipolar cellular bud site selection"/>
    <property type="evidence" value="ECO:0000315"/>
    <property type="project" value="SGD"/>
</dbReference>
<dbReference type="GO" id="GO:0000282">
    <property type="term" value="P:cellular bud site selection"/>
    <property type="evidence" value="ECO:0000318"/>
    <property type="project" value="GO_Central"/>
</dbReference>
<dbReference type="GO" id="GO:0008104">
    <property type="term" value="P:protein localization"/>
    <property type="evidence" value="ECO:0000315"/>
    <property type="project" value="SGD"/>
</dbReference>
<dbReference type="InterPro" id="IPR011047">
    <property type="entry name" value="Quinoprotein_ADH-like_sf"/>
</dbReference>
<dbReference type="InterPro" id="IPR024982">
    <property type="entry name" value="Rax2-like_C"/>
</dbReference>
<dbReference type="InterPro" id="IPR048266">
    <property type="entry name" value="Rax2-like_second"/>
</dbReference>
<dbReference type="InterPro" id="IPR048265">
    <property type="entry name" value="Rax2-like_third"/>
</dbReference>
<dbReference type="PANTHER" id="PTHR31778">
    <property type="entry name" value="BUD SITE SELECTION PROTEIN RAX2"/>
    <property type="match status" value="1"/>
</dbReference>
<dbReference type="PANTHER" id="PTHR31778:SF2">
    <property type="entry name" value="BUD SITE SELECTION PROTEIN RAX2"/>
    <property type="match status" value="1"/>
</dbReference>
<dbReference type="Pfam" id="PF12768">
    <property type="entry name" value="Rax2"/>
    <property type="match status" value="1"/>
</dbReference>
<dbReference type="Pfam" id="PF20842">
    <property type="entry name" value="Rax2_2"/>
    <property type="match status" value="1"/>
</dbReference>
<dbReference type="Pfam" id="PF20843">
    <property type="entry name" value="Rax2_3"/>
    <property type="match status" value="1"/>
</dbReference>
<dbReference type="SUPFAM" id="SSF50998">
    <property type="entry name" value="Quinoprotein alcohol dehydrogenase-like"/>
    <property type="match status" value="1"/>
</dbReference>
<protein>
    <recommendedName>
        <fullName>Bud site selection protein RAX2</fullName>
    </recommendedName>
    <alternativeName>
        <fullName>Revert to axial protein 2</fullName>
    </alternativeName>
</protein>